<name>RBM34_HUMAN</name>
<feature type="chain" id="PRO_0000081790" description="RNA-binding protein 34">
    <location>
        <begin position="1"/>
        <end position="430"/>
    </location>
</feature>
<feature type="domain" description="RRM 1" evidence="2">
    <location>
        <begin position="185"/>
        <end position="280"/>
    </location>
</feature>
<feature type="domain" description="RRM 2" evidence="2">
    <location>
        <begin position="287"/>
        <end position="364"/>
    </location>
</feature>
<feature type="region of interest" description="Disordered" evidence="3">
    <location>
        <begin position="1"/>
        <end position="55"/>
    </location>
</feature>
<feature type="region of interest" description="Disordered" evidence="3">
    <location>
        <begin position="72"/>
        <end position="123"/>
    </location>
</feature>
<feature type="region of interest" description="Disordered" evidence="3">
    <location>
        <begin position="134"/>
        <end position="153"/>
    </location>
</feature>
<feature type="region of interest" description="Disordered" evidence="3">
    <location>
        <begin position="365"/>
        <end position="395"/>
    </location>
</feature>
<feature type="region of interest" description="Disordered" evidence="3">
    <location>
        <begin position="411"/>
        <end position="430"/>
    </location>
</feature>
<feature type="compositionally biased region" description="Basic and acidic residues" evidence="3">
    <location>
        <begin position="23"/>
        <end position="34"/>
    </location>
</feature>
<feature type="compositionally biased region" description="Basic and acidic residues" evidence="3">
    <location>
        <begin position="113"/>
        <end position="123"/>
    </location>
</feature>
<feature type="modified residue" description="Phosphoserine" evidence="7 10 11 12 13">
    <location>
        <position position="14"/>
    </location>
</feature>
<feature type="modified residue" description="Phosphoserine" evidence="7 9 10 13">
    <location>
        <position position="28"/>
    </location>
</feature>
<feature type="modified residue" description="Phosphoserine" evidence="8">
    <location>
        <position position="99"/>
    </location>
</feature>
<feature type="modified residue" description="N6-acetyllysine" evidence="1">
    <location>
        <position position="151"/>
    </location>
</feature>
<feature type="modified residue" description="Phosphoserine" evidence="11">
    <location>
        <position position="288"/>
    </location>
</feature>
<feature type="cross-link" description="Glycyl lysine isopeptide (Lys-Gly) (interchain with G-Cter in SUMO2)" evidence="14">
    <location>
        <position position="242"/>
    </location>
</feature>
<feature type="splice variant" id="VSP_037037" description="In isoform 2." evidence="5">
    <original>IPAEGT</original>
    <variation>VCFIPP</variation>
    <location>
        <begin position="220"/>
        <end position="225"/>
    </location>
</feature>
<feature type="splice variant" id="VSP_037038" description="In isoform 2." evidence="5">
    <location>
        <begin position="226"/>
        <end position="430"/>
    </location>
</feature>
<feature type="sequence conflict" description="In Ref. 2; BAF85051." evidence="6" ref="2">
    <original>I</original>
    <variation>V</variation>
    <location>
        <position position="94"/>
    </location>
</feature>
<accession>P42696</accession>
<accession>A8K8J7</accession>
<accession>Q8N2Z8</accession>
<accession>Q9H5A1</accession>
<protein>
    <recommendedName>
        <fullName>RNA-binding protein 34</fullName>
    </recommendedName>
    <alternativeName>
        <fullName>RNA-binding motif protein 34</fullName>
    </alternativeName>
</protein>
<gene>
    <name type="primary">RBM34</name>
    <name type="synonym">KIAA0117</name>
</gene>
<dbReference type="EMBL" id="D38491">
    <property type="protein sequence ID" value="BAA07503.1"/>
    <property type="status" value="ALT_INIT"/>
    <property type="molecule type" value="mRNA"/>
</dbReference>
<dbReference type="EMBL" id="AK292362">
    <property type="protein sequence ID" value="BAF85051.1"/>
    <property type="status" value="ALT_INIT"/>
    <property type="molecule type" value="mRNA"/>
</dbReference>
<dbReference type="EMBL" id="AL133418">
    <property type="status" value="NOT_ANNOTATED_CDS"/>
    <property type="molecule type" value="Genomic_DNA"/>
</dbReference>
<dbReference type="EMBL" id="AL732292">
    <property type="status" value="NOT_ANNOTATED_CDS"/>
    <property type="molecule type" value="Genomic_DNA"/>
</dbReference>
<dbReference type="EMBL" id="BC029451">
    <property type="protein sequence ID" value="AAH29451.1"/>
    <property type="status" value="ALT_INIT"/>
    <property type="molecule type" value="mRNA"/>
</dbReference>
<dbReference type="CCDS" id="CCDS41477.2">
    <molecule id="P42696-1"/>
</dbReference>
<dbReference type="RefSeq" id="NP_001333667.1">
    <property type="nucleotide sequence ID" value="NM_001346738.1"/>
</dbReference>
<dbReference type="RefSeq" id="NP_055829.2">
    <molecule id="P42696-1"/>
    <property type="nucleotide sequence ID" value="NM_015014.4"/>
</dbReference>
<dbReference type="SMR" id="P42696"/>
<dbReference type="BioGRID" id="116668">
    <property type="interactions" value="312"/>
</dbReference>
<dbReference type="FunCoup" id="P42696">
    <property type="interactions" value="2568"/>
</dbReference>
<dbReference type="IntAct" id="P42696">
    <property type="interactions" value="213"/>
</dbReference>
<dbReference type="MINT" id="P42696"/>
<dbReference type="STRING" id="9606.ENSP00000386226"/>
<dbReference type="CarbonylDB" id="P42696"/>
<dbReference type="GlyGen" id="P42696">
    <property type="glycosylation" value="1 site, 1 N-linked glycan (1 site)"/>
</dbReference>
<dbReference type="iPTMnet" id="P42696"/>
<dbReference type="MetOSite" id="P42696"/>
<dbReference type="PhosphoSitePlus" id="P42696"/>
<dbReference type="SwissPalm" id="P42696"/>
<dbReference type="BioMuta" id="RBM34"/>
<dbReference type="DMDM" id="57013870"/>
<dbReference type="jPOST" id="P42696"/>
<dbReference type="MassIVE" id="P42696"/>
<dbReference type="PaxDb" id="9606-ENSP00000386226"/>
<dbReference type="PeptideAtlas" id="P42696"/>
<dbReference type="ProteomicsDB" id="55541">
    <molecule id="P42696-1"/>
</dbReference>
<dbReference type="ProteomicsDB" id="55542">
    <molecule id="P42696-2"/>
</dbReference>
<dbReference type="Pumba" id="P42696"/>
<dbReference type="Antibodypedia" id="34694">
    <property type="antibodies" value="120 antibodies from 22 providers"/>
</dbReference>
<dbReference type="DNASU" id="23029"/>
<dbReference type="Ensembl" id="ENST00000408888.8">
    <molecule id="P42696-1"/>
    <property type="protein sequence ID" value="ENSP00000386226.3"/>
    <property type="gene ID" value="ENSG00000188739.15"/>
</dbReference>
<dbReference type="GeneID" id="23029"/>
<dbReference type="KEGG" id="hsa:23029"/>
<dbReference type="MANE-Select" id="ENST00000408888.8">
    <property type="protein sequence ID" value="ENSP00000386226.3"/>
    <property type="RefSeq nucleotide sequence ID" value="NM_015014.4"/>
    <property type="RefSeq protein sequence ID" value="NP_055829.2"/>
</dbReference>
<dbReference type="UCSC" id="uc001hwn.3">
    <molecule id="P42696-1"/>
    <property type="organism name" value="human"/>
</dbReference>
<dbReference type="AGR" id="HGNC:28965"/>
<dbReference type="CTD" id="23029"/>
<dbReference type="DisGeNET" id="23029"/>
<dbReference type="GeneCards" id="RBM34"/>
<dbReference type="HGNC" id="HGNC:28965">
    <property type="gene designation" value="RBM34"/>
</dbReference>
<dbReference type="HPA" id="ENSG00000188739">
    <property type="expression patterns" value="Low tissue specificity"/>
</dbReference>
<dbReference type="MIM" id="619915">
    <property type="type" value="gene"/>
</dbReference>
<dbReference type="neXtProt" id="NX_P42696"/>
<dbReference type="OpenTargets" id="ENSG00000188739"/>
<dbReference type="PharmGKB" id="PA142671094"/>
<dbReference type="VEuPathDB" id="HostDB:ENSG00000188739"/>
<dbReference type="eggNOG" id="KOG0118">
    <property type="taxonomic scope" value="Eukaryota"/>
</dbReference>
<dbReference type="GeneTree" id="ENSGT00390000011249"/>
<dbReference type="HOGENOM" id="CLU_050628_0_0_1"/>
<dbReference type="InParanoid" id="P42696"/>
<dbReference type="OMA" id="CAVPKKG"/>
<dbReference type="OrthoDB" id="442677at2759"/>
<dbReference type="PAN-GO" id="P42696">
    <property type="GO annotations" value="0 GO annotations based on evolutionary models"/>
</dbReference>
<dbReference type="PhylomeDB" id="P42696"/>
<dbReference type="TreeFam" id="TF313083"/>
<dbReference type="PathwayCommons" id="P42696"/>
<dbReference type="SignaLink" id="P42696"/>
<dbReference type="BioGRID-ORCS" id="23029">
    <property type="hits" value="46 hits in 1163 CRISPR screens"/>
</dbReference>
<dbReference type="CD-CODE" id="91857CE7">
    <property type="entry name" value="Nucleolus"/>
</dbReference>
<dbReference type="ChiTaRS" id="RBM34">
    <property type="organism name" value="human"/>
</dbReference>
<dbReference type="GeneWiki" id="RBM34"/>
<dbReference type="GenomeRNAi" id="23029"/>
<dbReference type="Pharos" id="P42696">
    <property type="development level" value="Tdark"/>
</dbReference>
<dbReference type="PRO" id="PR:P42696"/>
<dbReference type="Proteomes" id="UP000005640">
    <property type="component" value="Chromosome 1"/>
</dbReference>
<dbReference type="RNAct" id="P42696">
    <property type="molecule type" value="protein"/>
</dbReference>
<dbReference type="Bgee" id="ENSG00000188739">
    <property type="expression patterns" value="Expressed in calcaneal tendon and 96 other cell types or tissues"/>
</dbReference>
<dbReference type="ExpressionAtlas" id="P42696">
    <property type="expression patterns" value="baseline and differential"/>
</dbReference>
<dbReference type="GO" id="GO:0005694">
    <property type="term" value="C:chromosome"/>
    <property type="evidence" value="ECO:0000314"/>
    <property type="project" value="HPA"/>
</dbReference>
<dbReference type="GO" id="GO:0005730">
    <property type="term" value="C:nucleolus"/>
    <property type="evidence" value="ECO:0000314"/>
    <property type="project" value="HPA"/>
</dbReference>
<dbReference type="GO" id="GO:0005654">
    <property type="term" value="C:nucleoplasm"/>
    <property type="evidence" value="ECO:0000314"/>
    <property type="project" value="HPA"/>
</dbReference>
<dbReference type="GO" id="GO:0003723">
    <property type="term" value="F:RNA binding"/>
    <property type="evidence" value="ECO:0007005"/>
    <property type="project" value="UniProtKB"/>
</dbReference>
<dbReference type="GO" id="GO:0000463">
    <property type="term" value="P:maturation of LSU-rRNA from tricistronic rRNA transcript (SSU-rRNA, 5.8S rRNA, LSU-rRNA)"/>
    <property type="evidence" value="ECO:0000318"/>
    <property type="project" value="GO_Central"/>
</dbReference>
<dbReference type="CDD" id="cd12394">
    <property type="entry name" value="RRM1_RBM34"/>
    <property type="match status" value="1"/>
</dbReference>
<dbReference type="CDD" id="cd12395">
    <property type="entry name" value="RRM2_RBM34"/>
    <property type="match status" value="1"/>
</dbReference>
<dbReference type="FunFam" id="3.30.70.330:FF:000511">
    <property type="entry name" value="RNA binding motif protein 34"/>
    <property type="match status" value="1"/>
</dbReference>
<dbReference type="FunFam" id="3.30.70.330:FF:000561">
    <property type="entry name" value="RNA-binding protein 34 isoform X2"/>
    <property type="match status" value="1"/>
</dbReference>
<dbReference type="Gene3D" id="3.30.70.330">
    <property type="match status" value="2"/>
</dbReference>
<dbReference type="InterPro" id="IPR012677">
    <property type="entry name" value="Nucleotide-bd_a/b_plait_sf"/>
</dbReference>
<dbReference type="InterPro" id="IPR035979">
    <property type="entry name" value="RBD_domain_sf"/>
</dbReference>
<dbReference type="InterPro" id="IPR034221">
    <property type="entry name" value="RBM34_RRM2"/>
</dbReference>
<dbReference type="InterPro" id="IPR000504">
    <property type="entry name" value="RRM_dom"/>
</dbReference>
<dbReference type="PANTHER" id="PTHR23236">
    <property type="entry name" value="EUKARYOTIC TRANSLATION INITIATION FACTOR 4B/4H"/>
    <property type="match status" value="1"/>
</dbReference>
<dbReference type="PANTHER" id="PTHR23236:SF119">
    <property type="entry name" value="NUCLEAR RNA-BINDING PROTEIN SART-3"/>
    <property type="match status" value="1"/>
</dbReference>
<dbReference type="Pfam" id="PF00076">
    <property type="entry name" value="RRM_1"/>
    <property type="match status" value="2"/>
</dbReference>
<dbReference type="SMART" id="SM00360">
    <property type="entry name" value="RRM"/>
    <property type="match status" value="2"/>
</dbReference>
<dbReference type="SUPFAM" id="SSF54928">
    <property type="entry name" value="RNA-binding domain, RBD"/>
    <property type="match status" value="2"/>
</dbReference>
<dbReference type="PROSITE" id="PS50102">
    <property type="entry name" value="RRM"/>
    <property type="match status" value="2"/>
</dbReference>
<sequence length="430" mass="48565">MALEGMSKRKRKRSVQEGENPDDGVRGSPPEDYRLGQVASSLFRGEHHSRGGTGRLASLFSSLEPQIQPVYVPVPKQTIKKTKRNEEEESTSQIERPLSQEPAKKVKAKKKHTNAEKKLADRESALASADLEEEIHQKQGQKRKNSQPGVKVADRKILDDTEDTVVSQRKKIQINQEEERLKNERTVFVGNLPVTCNKKKLKSFFKEYGQIESVRFRSLIPAEGTLSKKLAAIKRKIHPDQKNINAYVVFKEESAATQALKRNGAQIADGFRIRVDLASETSSRDKRSVFVGNLPYKVEESAIEKHFLDCGSIMAVRIVRDKMTGIGKGFGYVLFENTDSVHLALKLNNSELMGRKLRVMRSVNKEKFKQQNSNPRLKNVSKPKQGLNFTSKTAEGHPKSLFIGEKAVLLKTKKKGQKKSGRPKKQRKQK</sequence>
<keyword id="KW-0007">Acetylation</keyword>
<keyword id="KW-0025">Alternative splicing</keyword>
<keyword id="KW-1017">Isopeptide bond</keyword>
<keyword id="KW-0539">Nucleus</keyword>
<keyword id="KW-0597">Phosphoprotein</keyword>
<keyword id="KW-1267">Proteomics identification</keyword>
<keyword id="KW-1185">Reference proteome</keyword>
<keyword id="KW-0677">Repeat</keyword>
<keyword id="KW-0694">RNA-binding</keyword>
<keyword id="KW-0832">Ubl conjugation</keyword>
<comment type="subcellular location">
    <subcellularLocation>
        <location evidence="4">Nucleus</location>
        <location evidence="4">Nucleolus</location>
    </subcellularLocation>
</comment>
<comment type="alternative products">
    <event type="alternative splicing"/>
    <isoform>
        <id>P42696-1</id>
        <name>1</name>
        <sequence type="displayed"/>
    </isoform>
    <isoform>
        <id>P42696-2</id>
        <name>2</name>
        <sequence type="described" ref="VSP_037037 VSP_037038"/>
    </isoform>
</comment>
<comment type="miscellaneous">
    <molecule>Isoform 2</molecule>
    <text evidence="6">May be due to an intron retention.</text>
</comment>
<comment type="similarity">
    <text evidence="6">Belongs to the RRM RBM34 family.</text>
</comment>
<comment type="sequence caution" evidence="6">
    <conflict type="erroneous initiation">
        <sequence resource="EMBL-CDS" id="AAH29451"/>
    </conflict>
</comment>
<comment type="sequence caution" evidence="6">
    <conflict type="erroneous initiation">
        <sequence resource="EMBL-CDS" id="BAA07503"/>
    </conflict>
</comment>
<comment type="sequence caution" evidence="6">
    <conflict type="erroneous initiation">
        <sequence resource="EMBL-CDS" id="BAF85051"/>
    </conflict>
</comment>
<evidence type="ECO:0000250" key="1">
    <source>
        <dbReference type="UniProtKB" id="Q8C5L7"/>
    </source>
</evidence>
<evidence type="ECO:0000255" key="2">
    <source>
        <dbReference type="PROSITE-ProRule" id="PRU00176"/>
    </source>
</evidence>
<evidence type="ECO:0000256" key="3">
    <source>
        <dbReference type="SAM" id="MobiDB-lite"/>
    </source>
</evidence>
<evidence type="ECO:0000269" key="4">
    <source>
    </source>
</evidence>
<evidence type="ECO:0000303" key="5">
    <source>
    </source>
</evidence>
<evidence type="ECO:0000305" key="6"/>
<evidence type="ECO:0007744" key="7">
    <source>
    </source>
</evidence>
<evidence type="ECO:0007744" key="8">
    <source>
    </source>
</evidence>
<evidence type="ECO:0007744" key="9">
    <source>
    </source>
</evidence>
<evidence type="ECO:0007744" key="10">
    <source>
    </source>
</evidence>
<evidence type="ECO:0007744" key="11">
    <source>
    </source>
</evidence>
<evidence type="ECO:0007744" key="12">
    <source>
    </source>
</evidence>
<evidence type="ECO:0007744" key="13">
    <source>
    </source>
</evidence>
<evidence type="ECO:0007744" key="14">
    <source>
    </source>
</evidence>
<organism>
    <name type="scientific">Homo sapiens</name>
    <name type="common">Human</name>
    <dbReference type="NCBI Taxonomy" id="9606"/>
    <lineage>
        <taxon>Eukaryota</taxon>
        <taxon>Metazoa</taxon>
        <taxon>Chordata</taxon>
        <taxon>Craniata</taxon>
        <taxon>Vertebrata</taxon>
        <taxon>Euteleostomi</taxon>
        <taxon>Mammalia</taxon>
        <taxon>Eutheria</taxon>
        <taxon>Euarchontoglires</taxon>
        <taxon>Primates</taxon>
        <taxon>Haplorrhini</taxon>
        <taxon>Catarrhini</taxon>
        <taxon>Hominidae</taxon>
        <taxon>Homo</taxon>
    </lineage>
</organism>
<reference key="1">
    <citation type="journal article" date="1995" name="DNA Res.">
        <title>Prediction of the coding sequences of unidentified human genes. III. The coding sequences of 40 new genes (KIAA0081-KIAA0120) deduced by analysis of cDNA clones from human cell line KG-1.</title>
        <authorList>
            <person name="Nagase T."/>
            <person name="Miyajima N."/>
            <person name="Tanaka A."/>
            <person name="Sazuka T."/>
            <person name="Seki N."/>
            <person name="Sato S."/>
            <person name="Tabata S."/>
            <person name="Ishikawa K."/>
            <person name="Kawarabayasi Y."/>
            <person name="Kotani H."/>
            <person name="Nomura N."/>
        </authorList>
    </citation>
    <scope>NUCLEOTIDE SEQUENCE [LARGE SCALE MRNA] (ISOFORM 2)</scope>
    <source>
        <tissue>Bone marrow</tissue>
    </source>
</reference>
<reference key="2">
    <citation type="journal article" date="2004" name="Nat. Genet.">
        <title>Complete sequencing and characterization of 21,243 full-length human cDNAs.</title>
        <authorList>
            <person name="Ota T."/>
            <person name="Suzuki Y."/>
            <person name="Nishikawa T."/>
            <person name="Otsuki T."/>
            <person name="Sugiyama T."/>
            <person name="Irie R."/>
            <person name="Wakamatsu A."/>
            <person name="Hayashi K."/>
            <person name="Sato H."/>
            <person name="Nagai K."/>
            <person name="Kimura K."/>
            <person name="Makita H."/>
            <person name="Sekine M."/>
            <person name="Obayashi M."/>
            <person name="Nishi T."/>
            <person name="Shibahara T."/>
            <person name="Tanaka T."/>
            <person name="Ishii S."/>
            <person name="Yamamoto J."/>
            <person name="Saito K."/>
            <person name="Kawai Y."/>
            <person name="Isono Y."/>
            <person name="Nakamura Y."/>
            <person name="Nagahari K."/>
            <person name="Murakami K."/>
            <person name="Yasuda T."/>
            <person name="Iwayanagi T."/>
            <person name="Wagatsuma M."/>
            <person name="Shiratori A."/>
            <person name="Sudo H."/>
            <person name="Hosoiri T."/>
            <person name="Kaku Y."/>
            <person name="Kodaira H."/>
            <person name="Kondo H."/>
            <person name="Sugawara M."/>
            <person name="Takahashi M."/>
            <person name="Kanda K."/>
            <person name="Yokoi T."/>
            <person name="Furuya T."/>
            <person name="Kikkawa E."/>
            <person name="Omura Y."/>
            <person name="Abe K."/>
            <person name="Kamihara K."/>
            <person name="Katsuta N."/>
            <person name="Sato K."/>
            <person name="Tanikawa M."/>
            <person name="Yamazaki M."/>
            <person name="Ninomiya K."/>
            <person name="Ishibashi T."/>
            <person name="Yamashita H."/>
            <person name="Murakawa K."/>
            <person name="Fujimori K."/>
            <person name="Tanai H."/>
            <person name="Kimata M."/>
            <person name="Watanabe M."/>
            <person name="Hiraoka S."/>
            <person name="Chiba Y."/>
            <person name="Ishida S."/>
            <person name="Ono Y."/>
            <person name="Takiguchi S."/>
            <person name="Watanabe S."/>
            <person name="Yosida M."/>
            <person name="Hotuta T."/>
            <person name="Kusano J."/>
            <person name="Kanehori K."/>
            <person name="Takahashi-Fujii A."/>
            <person name="Hara H."/>
            <person name="Tanase T.-O."/>
            <person name="Nomura Y."/>
            <person name="Togiya S."/>
            <person name="Komai F."/>
            <person name="Hara R."/>
            <person name="Takeuchi K."/>
            <person name="Arita M."/>
            <person name="Imose N."/>
            <person name="Musashino K."/>
            <person name="Yuuki H."/>
            <person name="Oshima A."/>
            <person name="Sasaki N."/>
            <person name="Aotsuka S."/>
            <person name="Yoshikawa Y."/>
            <person name="Matsunawa H."/>
            <person name="Ichihara T."/>
            <person name="Shiohata N."/>
            <person name="Sano S."/>
            <person name="Moriya S."/>
            <person name="Momiyama H."/>
            <person name="Satoh N."/>
            <person name="Takami S."/>
            <person name="Terashima Y."/>
            <person name="Suzuki O."/>
            <person name="Nakagawa S."/>
            <person name="Senoh A."/>
            <person name="Mizoguchi H."/>
            <person name="Goto Y."/>
            <person name="Shimizu F."/>
            <person name="Wakebe H."/>
            <person name="Hishigaki H."/>
            <person name="Watanabe T."/>
            <person name="Sugiyama A."/>
            <person name="Takemoto M."/>
            <person name="Kawakami B."/>
            <person name="Yamazaki M."/>
            <person name="Watanabe K."/>
            <person name="Kumagai A."/>
            <person name="Itakura S."/>
            <person name="Fukuzumi Y."/>
            <person name="Fujimori Y."/>
            <person name="Komiyama M."/>
            <person name="Tashiro H."/>
            <person name="Tanigami A."/>
            <person name="Fujiwara T."/>
            <person name="Ono T."/>
            <person name="Yamada K."/>
            <person name="Fujii Y."/>
            <person name="Ozaki K."/>
            <person name="Hirao M."/>
            <person name="Ohmori Y."/>
            <person name="Kawabata A."/>
            <person name="Hikiji T."/>
            <person name="Kobatake N."/>
            <person name="Inagaki H."/>
            <person name="Ikema Y."/>
            <person name="Okamoto S."/>
            <person name="Okitani R."/>
            <person name="Kawakami T."/>
            <person name="Noguchi S."/>
            <person name="Itoh T."/>
            <person name="Shigeta K."/>
            <person name="Senba T."/>
            <person name="Matsumura K."/>
            <person name="Nakajima Y."/>
            <person name="Mizuno T."/>
            <person name="Morinaga M."/>
            <person name="Sasaki M."/>
            <person name="Togashi T."/>
            <person name="Oyama M."/>
            <person name="Hata H."/>
            <person name="Watanabe M."/>
            <person name="Komatsu T."/>
            <person name="Mizushima-Sugano J."/>
            <person name="Satoh T."/>
            <person name="Shirai Y."/>
            <person name="Takahashi Y."/>
            <person name="Nakagawa K."/>
            <person name="Okumura K."/>
            <person name="Nagase T."/>
            <person name="Nomura N."/>
            <person name="Kikuchi H."/>
            <person name="Masuho Y."/>
            <person name="Yamashita R."/>
            <person name="Nakai K."/>
            <person name="Yada T."/>
            <person name="Nakamura Y."/>
            <person name="Ohara O."/>
            <person name="Isogai T."/>
            <person name="Sugano S."/>
        </authorList>
    </citation>
    <scope>NUCLEOTIDE SEQUENCE [LARGE SCALE MRNA] (ISOFORM 1)</scope>
    <source>
        <tissue>Testis</tissue>
    </source>
</reference>
<reference key="3">
    <citation type="journal article" date="2006" name="Nature">
        <title>The DNA sequence and biological annotation of human chromosome 1.</title>
        <authorList>
            <person name="Gregory S.G."/>
            <person name="Barlow K.F."/>
            <person name="McLay K.E."/>
            <person name="Kaul R."/>
            <person name="Swarbreck D."/>
            <person name="Dunham A."/>
            <person name="Scott C.E."/>
            <person name="Howe K.L."/>
            <person name="Woodfine K."/>
            <person name="Spencer C.C.A."/>
            <person name="Jones M.C."/>
            <person name="Gillson C."/>
            <person name="Searle S."/>
            <person name="Zhou Y."/>
            <person name="Kokocinski F."/>
            <person name="McDonald L."/>
            <person name="Evans R."/>
            <person name="Phillips K."/>
            <person name="Atkinson A."/>
            <person name="Cooper R."/>
            <person name="Jones C."/>
            <person name="Hall R.E."/>
            <person name="Andrews T.D."/>
            <person name="Lloyd C."/>
            <person name="Ainscough R."/>
            <person name="Almeida J.P."/>
            <person name="Ambrose K.D."/>
            <person name="Anderson F."/>
            <person name="Andrew R.W."/>
            <person name="Ashwell R.I.S."/>
            <person name="Aubin K."/>
            <person name="Babbage A.K."/>
            <person name="Bagguley C.L."/>
            <person name="Bailey J."/>
            <person name="Beasley H."/>
            <person name="Bethel G."/>
            <person name="Bird C.P."/>
            <person name="Bray-Allen S."/>
            <person name="Brown J.Y."/>
            <person name="Brown A.J."/>
            <person name="Buckley D."/>
            <person name="Burton J."/>
            <person name="Bye J."/>
            <person name="Carder C."/>
            <person name="Chapman J.C."/>
            <person name="Clark S.Y."/>
            <person name="Clarke G."/>
            <person name="Clee C."/>
            <person name="Cobley V."/>
            <person name="Collier R.E."/>
            <person name="Corby N."/>
            <person name="Coville G.J."/>
            <person name="Davies J."/>
            <person name="Deadman R."/>
            <person name="Dunn M."/>
            <person name="Earthrowl M."/>
            <person name="Ellington A.G."/>
            <person name="Errington H."/>
            <person name="Frankish A."/>
            <person name="Frankland J."/>
            <person name="French L."/>
            <person name="Garner P."/>
            <person name="Garnett J."/>
            <person name="Gay L."/>
            <person name="Ghori M.R.J."/>
            <person name="Gibson R."/>
            <person name="Gilby L.M."/>
            <person name="Gillett W."/>
            <person name="Glithero R.J."/>
            <person name="Grafham D.V."/>
            <person name="Griffiths C."/>
            <person name="Griffiths-Jones S."/>
            <person name="Grocock R."/>
            <person name="Hammond S."/>
            <person name="Harrison E.S.I."/>
            <person name="Hart E."/>
            <person name="Haugen E."/>
            <person name="Heath P.D."/>
            <person name="Holmes S."/>
            <person name="Holt K."/>
            <person name="Howden P.J."/>
            <person name="Hunt A.R."/>
            <person name="Hunt S.E."/>
            <person name="Hunter G."/>
            <person name="Isherwood J."/>
            <person name="James R."/>
            <person name="Johnson C."/>
            <person name="Johnson D."/>
            <person name="Joy A."/>
            <person name="Kay M."/>
            <person name="Kershaw J.K."/>
            <person name="Kibukawa M."/>
            <person name="Kimberley A.M."/>
            <person name="King A."/>
            <person name="Knights A.J."/>
            <person name="Lad H."/>
            <person name="Laird G."/>
            <person name="Lawlor S."/>
            <person name="Leongamornlert D.A."/>
            <person name="Lloyd D.M."/>
            <person name="Loveland J."/>
            <person name="Lovell J."/>
            <person name="Lush M.J."/>
            <person name="Lyne R."/>
            <person name="Martin S."/>
            <person name="Mashreghi-Mohammadi M."/>
            <person name="Matthews L."/>
            <person name="Matthews N.S.W."/>
            <person name="McLaren S."/>
            <person name="Milne S."/>
            <person name="Mistry S."/>
            <person name="Moore M.J.F."/>
            <person name="Nickerson T."/>
            <person name="O'Dell C.N."/>
            <person name="Oliver K."/>
            <person name="Palmeiri A."/>
            <person name="Palmer S.A."/>
            <person name="Parker A."/>
            <person name="Patel D."/>
            <person name="Pearce A.V."/>
            <person name="Peck A.I."/>
            <person name="Pelan S."/>
            <person name="Phelps K."/>
            <person name="Phillimore B.J."/>
            <person name="Plumb R."/>
            <person name="Rajan J."/>
            <person name="Raymond C."/>
            <person name="Rouse G."/>
            <person name="Saenphimmachak C."/>
            <person name="Sehra H.K."/>
            <person name="Sheridan E."/>
            <person name="Shownkeen R."/>
            <person name="Sims S."/>
            <person name="Skuce C.D."/>
            <person name="Smith M."/>
            <person name="Steward C."/>
            <person name="Subramanian S."/>
            <person name="Sycamore N."/>
            <person name="Tracey A."/>
            <person name="Tromans A."/>
            <person name="Van Helmond Z."/>
            <person name="Wall M."/>
            <person name="Wallis J.M."/>
            <person name="White S."/>
            <person name="Whitehead S.L."/>
            <person name="Wilkinson J.E."/>
            <person name="Willey D.L."/>
            <person name="Williams H."/>
            <person name="Wilming L."/>
            <person name="Wray P.W."/>
            <person name="Wu Z."/>
            <person name="Coulson A."/>
            <person name="Vaudin M."/>
            <person name="Sulston J.E."/>
            <person name="Durbin R.M."/>
            <person name="Hubbard T."/>
            <person name="Wooster R."/>
            <person name="Dunham I."/>
            <person name="Carter N.P."/>
            <person name="McVean G."/>
            <person name="Ross M.T."/>
            <person name="Harrow J."/>
            <person name="Olson M.V."/>
            <person name="Beck S."/>
            <person name="Rogers J."/>
            <person name="Bentley D.R."/>
        </authorList>
    </citation>
    <scope>NUCLEOTIDE SEQUENCE [LARGE SCALE GENOMIC DNA]</scope>
</reference>
<reference key="4">
    <citation type="journal article" date="2004" name="Genome Res.">
        <title>The status, quality, and expansion of the NIH full-length cDNA project: the Mammalian Gene Collection (MGC).</title>
        <authorList>
            <consortium name="The MGC Project Team"/>
        </authorList>
    </citation>
    <scope>NUCLEOTIDE SEQUENCE [LARGE SCALE MRNA] (ISOFORM 1)</scope>
    <source>
        <tissue>Lung</tissue>
    </source>
</reference>
<reference key="5">
    <citation type="journal article" date="2002" name="Mol. Biol. Cell">
        <title>Functional proteomic analysis of human nucleolus.</title>
        <authorList>
            <person name="Scherl A."/>
            <person name="Coute Y."/>
            <person name="Deon C."/>
            <person name="Calle A."/>
            <person name="Kindbeiter K."/>
            <person name="Sanchez J.-C."/>
            <person name="Greco A."/>
            <person name="Hochstrasser D.F."/>
            <person name="Diaz J.-J."/>
        </authorList>
    </citation>
    <scope>SUBCELLULAR LOCATION [LARGE SCALE ANALYSIS]</scope>
    <source>
        <tissue>Cervix carcinoma</tissue>
    </source>
</reference>
<reference key="6">
    <citation type="journal article" date="2006" name="Cell">
        <title>Global, in vivo, and site-specific phosphorylation dynamics in signaling networks.</title>
        <authorList>
            <person name="Olsen J.V."/>
            <person name="Blagoev B."/>
            <person name="Gnad F."/>
            <person name="Macek B."/>
            <person name="Kumar C."/>
            <person name="Mortensen P."/>
            <person name="Mann M."/>
        </authorList>
    </citation>
    <scope>PHOSPHORYLATION [LARGE SCALE ANALYSIS] AT SER-14 AND SER-28</scope>
    <scope>IDENTIFICATION BY MASS SPECTROMETRY [LARGE SCALE ANALYSIS]</scope>
    <source>
        <tissue>Cervix carcinoma</tissue>
    </source>
</reference>
<reference key="7">
    <citation type="journal article" date="2007" name="Science">
        <title>ATM and ATR substrate analysis reveals extensive protein networks responsive to DNA damage.</title>
        <authorList>
            <person name="Matsuoka S."/>
            <person name="Ballif B.A."/>
            <person name="Smogorzewska A."/>
            <person name="McDonald E.R. III"/>
            <person name="Hurov K.E."/>
            <person name="Luo J."/>
            <person name="Bakalarski C.E."/>
            <person name="Zhao Z."/>
            <person name="Solimini N."/>
            <person name="Lerenthal Y."/>
            <person name="Shiloh Y."/>
            <person name="Gygi S.P."/>
            <person name="Elledge S.J."/>
        </authorList>
    </citation>
    <scope>PHOSPHORYLATION [LARGE SCALE ANALYSIS] AT SER-99</scope>
    <scope>IDENTIFICATION BY MASS SPECTROMETRY [LARGE SCALE ANALYSIS]</scope>
    <source>
        <tissue>Embryonic kidney</tissue>
    </source>
</reference>
<reference key="8">
    <citation type="journal article" date="2008" name="Proc. Natl. Acad. Sci. U.S.A.">
        <title>A quantitative atlas of mitotic phosphorylation.</title>
        <authorList>
            <person name="Dephoure N."/>
            <person name="Zhou C."/>
            <person name="Villen J."/>
            <person name="Beausoleil S.A."/>
            <person name="Bakalarski C.E."/>
            <person name="Elledge S.J."/>
            <person name="Gygi S.P."/>
        </authorList>
    </citation>
    <scope>PHOSPHORYLATION [LARGE SCALE ANALYSIS] AT SER-28</scope>
    <scope>IDENTIFICATION BY MASS SPECTROMETRY [LARGE SCALE ANALYSIS]</scope>
    <source>
        <tissue>Cervix carcinoma</tissue>
    </source>
</reference>
<reference key="9">
    <citation type="journal article" date="2009" name="Sci. Signal.">
        <title>Quantitative phosphoproteomic analysis of T cell receptor signaling reveals system-wide modulation of protein-protein interactions.</title>
        <authorList>
            <person name="Mayya V."/>
            <person name="Lundgren D.H."/>
            <person name="Hwang S.-I."/>
            <person name="Rezaul K."/>
            <person name="Wu L."/>
            <person name="Eng J.K."/>
            <person name="Rodionov V."/>
            <person name="Han D.K."/>
        </authorList>
    </citation>
    <scope>PHOSPHORYLATION [LARGE SCALE ANALYSIS] AT SER-14 AND SER-28</scope>
    <scope>IDENTIFICATION BY MASS SPECTROMETRY [LARGE SCALE ANALYSIS]</scope>
    <source>
        <tissue>Leukemic T-cell</tissue>
    </source>
</reference>
<reference key="10">
    <citation type="journal article" date="2010" name="Sci. Signal.">
        <title>Quantitative phosphoproteomics reveals widespread full phosphorylation site occupancy during mitosis.</title>
        <authorList>
            <person name="Olsen J.V."/>
            <person name="Vermeulen M."/>
            <person name="Santamaria A."/>
            <person name="Kumar C."/>
            <person name="Miller M.L."/>
            <person name="Jensen L.J."/>
            <person name="Gnad F."/>
            <person name="Cox J."/>
            <person name="Jensen T.S."/>
            <person name="Nigg E.A."/>
            <person name="Brunak S."/>
            <person name="Mann M."/>
        </authorList>
    </citation>
    <scope>PHOSPHORYLATION [LARGE SCALE ANALYSIS] AT SER-14 AND SER-288</scope>
    <scope>IDENTIFICATION BY MASS SPECTROMETRY [LARGE SCALE ANALYSIS]</scope>
    <source>
        <tissue>Cervix carcinoma</tissue>
    </source>
</reference>
<reference key="11">
    <citation type="journal article" date="2011" name="BMC Syst. Biol.">
        <title>Initial characterization of the human central proteome.</title>
        <authorList>
            <person name="Burkard T.R."/>
            <person name="Planyavsky M."/>
            <person name="Kaupe I."/>
            <person name="Breitwieser F.P."/>
            <person name="Buerckstuemmer T."/>
            <person name="Bennett K.L."/>
            <person name="Superti-Furga G."/>
            <person name="Colinge J."/>
        </authorList>
    </citation>
    <scope>IDENTIFICATION BY MASS SPECTROMETRY [LARGE SCALE ANALYSIS]</scope>
</reference>
<reference key="12">
    <citation type="journal article" date="2011" name="Sci. Signal.">
        <title>System-wide temporal characterization of the proteome and phosphoproteome of human embryonic stem cell differentiation.</title>
        <authorList>
            <person name="Rigbolt K.T."/>
            <person name="Prokhorova T.A."/>
            <person name="Akimov V."/>
            <person name="Henningsen J."/>
            <person name="Johansen P.T."/>
            <person name="Kratchmarova I."/>
            <person name="Kassem M."/>
            <person name="Mann M."/>
            <person name="Olsen J.V."/>
            <person name="Blagoev B."/>
        </authorList>
    </citation>
    <scope>PHOSPHORYLATION [LARGE SCALE ANALYSIS] AT SER-14</scope>
    <scope>IDENTIFICATION BY MASS SPECTROMETRY [LARGE SCALE ANALYSIS]</scope>
</reference>
<reference key="13">
    <citation type="journal article" date="2012" name="Proc. Natl. Acad. Sci. U.S.A.">
        <title>N-terminal acetylome analyses and functional insights of the N-terminal acetyltransferase NatB.</title>
        <authorList>
            <person name="Van Damme P."/>
            <person name="Lasa M."/>
            <person name="Polevoda B."/>
            <person name="Gazquez C."/>
            <person name="Elosegui-Artola A."/>
            <person name="Kim D.S."/>
            <person name="De Juan-Pardo E."/>
            <person name="Demeyer K."/>
            <person name="Hole K."/>
            <person name="Larrea E."/>
            <person name="Timmerman E."/>
            <person name="Prieto J."/>
            <person name="Arnesen T."/>
            <person name="Sherman F."/>
            <person name="Gevaert K."/>
            <person name="Aldabe R."/>
        </authorList>
    </citation>
    <scope>IDENTIFICATION BY MASS SPECTROMETRY [LARGE SCALE ANALYSIS]</scope>
</reference>
<reference key="14">
    <citation type="journal article" date="2013" name="J. Proteome Res.">
        <title>Toward a comprehensive characterization of a human cancer cell phosphoproteome.</title>
        <authorList>
            <person name="Zhou H."/>
            <person name="Di Palma S."/>
            <person name="Preisinger C."/>
            <person name="Peng M."/>
            <person name="Polat A.N."/>
            <person name="Heck A.J."/>
            <person name="Mohammed S."/>
        </authorList>
    </citation>
    <scope>PHOSPHORYLATION [LARGE SCALE ANALYSIS] AT SER-14 AND SER-28</scope>
    <scope>IDENTIFICATION BY MASS SPECTROMETRY [LARGE SCALE ANALYSIS]</scope>
    <source>
        <tissue>Cervix carcinoma</tissue>
        <tissue>Erythroleukemia</tissue>
    </source>
</reference>
<reference key="15">
    <citation type="journal article" date="2017" name="Nat. Struct. Mol. Biol.">
        <title>Site-specific mapping of the human SUMO proteome reveals co-modification with phosphorylation.</title>
        <authorList>
            <person name="Hendriks I.A."/>
            <person name="Lyon D."/>
            <person name="Young C."/>
            <person name="Jensen L.J."/>
            <person name="Vertegaal A.C."/>
            <person name="Nielsen M.L."/>
        </authorList>
    </citation>
    <scope>SUMOYLATION [LARGE SCALE ANALYSIS] AT LYS-242</scope>
    <scope>IDENTIFICATION BY MASS SPECTROMETRY [LARGE SCALE ANALYSIS]</scope>
</reference>
<proteinExistence type="evidence at protein level"/>